<dbReference type="EMBL" id="AF326499">
    <property type="protein sequence ID" value="AAK26766.1"/>
    <property type="molecule type" value="mRNA"/>
</dbReference>
<dbReference type="RefSeq" id="NP_001105640.1">
    <property type="nucleotide sequence ID" value="NM_001112170.1"/>
</dbReference>
<dbReference type="SMR" id="Q9ATM1"/>
<dbReference type="FunCoup" id="Q9ATM1">
    <property type="interactions" value="690"/>
</dbReference>
<dbReference type="STRING" id="4577.Q9ATM1"/>
<dbReference type="PaxDb" id="4577-GRMZM2G175038_P01"/>
<dbReference type="EnsemblPlants" id="Zm00001eb015230_T001">
    <property type="protein sequence ID" value="Zm00001eb015230_P001"/>
    <property type="gene ID" value="Zm00001eb015230"/>
</dbReference>
<dbReference type="GeneID" id="542646"/>
<dbReference type="Gramene" id="Zm00001eb015230_T001">
    <property type="protein sequence ID" value="Zm00001eb015230_P001"/>
    <property type="gene ID" value="Zm00001eb015230"/>
</dbReference>
<dbReference type="KEGG" id="zma:542646"/>
<dbReference type="MaizeGDB" id="403437"/>
<dbReference type="eggNOG" id="KOG0223">
    <property type="taxonomic scope" value="Eukaryota"/>
</dbReference>
<dbReference type="HOGENOM" id="CLU_100006_0_0_1"/>
<dbReference type="InParanoid" id="Q9ATM1"/>
<dbReference type="OMA" id="YMFIFAW"/>
<dbReference type="OrthoDB" id="1580043at2759"/>
<dbReference type="Proteomes" id="UP000007305">
    <property type="component" value="Chromosome 1"/>
</dbReference>
<dbReference type="ExpressionAtlas" id="Q9ATM1">
    <property type="expression patterns" value="baseline and differential"/>
</dbReference>
<dbReference type="GO" id="GO:0016020">
    <property type="term" value="C:membrane"/>
    <property type="evidence" value="ECO:0007669"/>
    <property type="project" value="UniProtKB-SubCell"/>
</dbReference>
<dbReference type="GO" id="GO:0015267">
    <property type="term" value="F:channel activity"/>
    <property type="evidence" value="ECO:0007669"/>
    <property type="project" value="InterPro"/>
</dbReference>
<dbReference type="Gene3D" id="1.20.1080.10">
    <property type="entry name" value="Glycerol uptake facilitator protein"/>
    <property type="match status" value="1"/>
</dbReference>
<dbReference type="InterPro" id="IPR023271">
    <property type="entry name" value="Aquaporin-like"/>
</dbReference>
<dbReference type="InterPro" id="IPR000425">
    <property type="entry name" value="MIP"/>
</dbReference>
<dbReference type="InterPro" id="IPR044226">
    <property type="entry name" value="SIP2-1-like"/>
</dbReference>
<dbReference type="PANTHER" id="PTHR47720">
    <property type="entry name" value="AQUAPORIN SIP2-1-RELATED"/>
    <property type="match status" value="1"/>
</dbReference>
<dbReference type="PANTHER" id="PTHR47720:SF1">
    <property type="entry name" value="AQUAPORIN SIP2-1-RELATED"/>
    <property type="match status" value="1"/>
</dbReference>
<dbReference type="Pfam" id="PF00230">
    <property type="entry name" value="MIP"/>
    <property type="match status" value="1"/>
</dbReference>
<dbReference type="SUPFAM" id="SSF81338">
    <property type="entry name" value="Aquaporin-like"/>
    <property type="match status" value="1"/>
</dbReference>
<reference key="1">
    <citation type="journal article" date="2001" name="Plant Physiol.">
        <title>Aquaporins constitute a large and highly divergent protein family in maize.</title>
        <authorList>
            <person name="Chaumont F."/>
            <person name="Barrieu F."/>
            <person name="Wojcik E."/>
            <person name="Chrispeels M.J."/>
            <person name="Jung R."/>
        </authorList>
    </citation>
    <scope>NUCLEOTIDE SEQUENCE [MRNA]</scope>
    <scope>GENE FAMILY</scope>
    <scope>NOMENCLATURE</scope>
    <source>
        <strain>cv. B73</strain>
    </source>
</reference>
<sequence>MSPAPSRPRIRPWLVVGDLALAAAWVCAGALVKLLVYGGLGLGGRPEAEAVKVSLSLVYMFLFAWLEAASGGASYNPLTVLAAALASHGGPAVYLFTAFARIPAQVIGAVLGVKLIQVTFPNVGKGARLSVGAHHGALAEGLATFMVVMVSVTLKKKEMKSFFMKTWITSIWKNTIHLLSSDITGGIMNPASAFAWAYARGDHTTFDHLLVYWLAPLQATLLGVWAVTFFTKPKKIKEQKVDENKIKKE</sequence>
<protein>
    <recommendedName>
        <fullName>Aquaporin SIP2-1</fullName>
    </recommendedName>
    <alternativeName>
        <fullName>Small basic intrinsic protein 2-1</fullName>
    </alternativeName>
    <alternativeName>
        <fullName>ZmSIP2-1</fullName>
    </alternativeName>
    <alternativeName>
        <fullName>ZmSIP2;1</fullName>
    </alternativeName>
</protein>
<proteinExistence type="evidence at transcript level"/>
<evidence type="ECO:0000250" key="1"/>
<evidence type="ECO:0000255" key="2"/>
<evidence type="ECO:0000305" key="3"/>
<organism>
    <name type="scientific">Zea mays</name>
    <name type="common">Maize</name>
    <dbReference type="NCBI Taxonomy" id="4577"/>
    <lineage>
        <taxon>Eukaryota</taxon>
        <taxon>Viridiplantae</taxon>
        <taxon>Streptophyta</taxon>
        <taxon>Embryophyta</taxon>
        <taxon>Tracheophyta</taxon>
        <taxon>Spermatophyta</taxon>
        <taxon>Magnoliopsida</taxon>
        <taxon>Liliopsida</taxon>
        <taxon>Poales</taxon>
        <taxon>Poaceae</taxon>
        <taxon>PACMAD clade</taxon>
        <taxon>Panicoideae</taxon>
        <taxon>Andropogonodae</taxon>
        <taxon>Andropogoneae</taxon>
        <taxon>Tripsacinae</taxon>
        <taxon>Zea</taxon>
    </lineage>
</organism>
<accession>Q9ATM1</accession>
<gene>
    <name type="primary">SIP2-1</name>
    <name type="synonym">SIP2A</name>
</gene>
<feature type="chain" id="PRO_0000286042" description="Aquaporin SIP2-1">
    <location>
        <begin position="1"/>
        <end position="249"/>
    </location>
</feature>
<feature type="transmembrane region" description="Helical; Name=1" evidence="2">
    <location>
        <begin position="12"/>
        <end position="32"/>
    </location>
</feature>
<feature type="transmembrane region" description="Helical; Name=2" evidence="2">
    <location>
        <begin position="53"/>
        <end position="73"/>
    </location>
</feature>
<feature type="transmembrane region" description="Helical; Name=3" evidence="2">
    <location>
        <begin position="104"/>
        <end position="124"/>
    </location>
</feature>
<feature type="transmembrane region" description="Helical; Name=4" evidence="2">
    <location>
        <begin position="133"/>
        <end position="155"/>
    </location>
</feature>
<feature type="transmembrane region" description="Helical; Name=5" evidence="2">
    <location>
        <begin position="176"/>
        <end position="196"/>
    </location>
</feature>
<feature type="transmembrane region" description="Helical; Name=6" evidence="2">
    <location>
        <begin position="210"/>
        <end position="230"/>
    </location>
</feature>
<feature type="short sequence motif" description="NPA 1" evidence="1">
    <location>
        <begin position="76"/>
        <end position="78"/>
    </location>
</feature>
<feature type="short sequence motif" description="NPA 2" evidence="1">
    <location>
        <begin position="189"/>
        <end position="191"/>
    </location>
</feature>
<comment type="function">
    <text evidence="1">Aquaporins facilitate the transport of water and small neutral solutes across cell membranes.</text>
</comment>
<comment type="subcellular location">
    <subcellularLocation>
        <location evidence="3">Membrane</location>
        <topology evidence="3">Multi-pass membrane protein</topology>
    </subcellularLocation>
</comment>
<comment type="domain">
    <text>Aquaporins contain two tandem repeats each containing three membrane-spanning domains and a pore-forming loop with the signature motif Asn-Pro-Ala (NPA).</text>
</comment>
<comment type="similarity">
    <text evidence="3">Belongs to the MIP/aquaporin (TC 1.A.8) family. SIP (TC 1.A.8.10) subfamily.</text>
</comment>
<name>SIP21_MAIZE</name>
<keyword id="KW-0472">Membrane</keyword>
<keyword id="KW-1185">Reference proteome</keyword>
<keyword id="KW-0677">Repeat</keyword>
<keyword id="KW-0812">Transmembrane</keyword>
<keyword id="KW-1133">Transmembrane helix</keyword>
<keyword id="KW-0813">Transport</keyword>